<protein>
    <recommendedName>
        <fullName evidence="1">Large ribosomal subunit protein bL17</fullName>
    </recommendedName>
    <alternativeName>
        <fullName evidence="2">50S ribosomal protein L17</fullName>
    </alternativeName>
</protein>
<sequence>MPFSKLGRNKSQRRALLRTLMTDLIVNEQIITTESKAKELQRLADKMITLAKKGTLHTRRQAARHLFDEKINEETTVLQKLFQKLASQYLNCQGGYTRVIKTVPRRGDAAPMAIIAFA</sequence>
<comment type="subunit">
    <text evidence="1">Part of the 50S ribosomal subunit. Contacts protein L32.</text>
</comment>
<comment type="similarity">
    <text evidence="1">Belongs to the bacterial ribosomal protein bL17 family.</text>
</comment>
<dbReference type="EMBL" id="AM422018">
    <property type="protein sequence ID" value="CAM11893.1"/>
    <property type="molecule type" value="Genomic_DNA"/>
</dbReference>
<dbReference type="SMR" id="B1VAC0"/>
<dbReference type="STRING" id="59748.PA0559"/>
<dbReference type="KEGG" id="pal:PA0559"/>
<dbReference type="eggNOG" id="COG0203">
    <property type="taxonomic scope" value="Bacteria"/>
</dbReference>
<dbReference type="Proteomes" id="UP000008323">
    <property type="component" value="Chromosome"/>
</dbReference>
<dbReference type="GO" id="GO:0015934">
    <property type="term" value="C:large ribosomal subunit"/>
    <property type="evidence" value="ECO:0007669"/>
    <property type="project" value="TreeGrafter"/>
</dbReference>
<dbReference type="GO" id="GO:0003735">
    <property type="term" value="F:structural constituent of ribosome"/>
    <property type="evidence" value="ECO:0007669"/>
    <property type="project" value="InterPro"/>
</dbReference>
<dbReference type="GO" id="GO:0006412">
    <property type="term" value="P:translation"/>
    <property type="evidence" value="ECO:0007669"/>
    <property type="project" value="UniProtKB-UniRule"/>
</dbReference>
<dbReference type="Gene3D" id="3.90.1030.10">
    <property type="entry name" value="Ribosomal protein L17"/>
    <property type="match status" value="1"/>
</dbReference>
<dbReference type="HAMAP" id="MF_01368">
    <property type="entry name" value="Ribosomal_bL17"/>
    <property type="match status" value="1"/>
</dbReference>
<dbReference type="InterPro" id="IPR000456">
    <property type="entry name" value="Ribosomal_bL17"/>
</dbReference>
<dbReference type="InterPro" id="IPR047859">
    <property type="entry name" value="Ribosomal_bL17_CS"/>
</dbReference>
<dbReference type="InterPro" id="IPR036373">
    <property type="entry name" value="Ribosomal_bL17_sf"/>
</dbReference>
<dbReference type="NCBIfam" id="TIGR00059">
    <property type="entry name" value="L17"/>
    <property type="match status" value="1"/>
</dbReference>
<dbReference type="PANTHER" id="PTHR14413:SF16">
    <property type="entry name" value="LARGE RIBOSOMAL SUBUNIT PROTEIN BL17M"/>
    <property type="match status" value="1"/>
</dbReference>
<dbReference type="PANTHER" id="PTHR14413">
    <property type="entry name" value="RIBOSOMAL PROTEIN L17"/>
    <property type="match status" value="1"/>
</dbReference>
<dbReference type="Pfam" id="PF01196">
    <property type="entry name" value="Ribosomal_L17"/>
    <property type="match status" value="1"/>
</dbReference>
<dbReference type="SUPFAM" id="SSF64263">
    <property type="entry name" value="Prokaryotic ribosomal protein L17"/>
    <property type="match status" value="1"/>
</dbReference>
<dbReference type="PROSITE" id="PS01167">
    <property type="entry name" value="RIBOSOMAL_L17"/>
    <property type="match status" value="1"/>
</dbReference>
<name>RL17_PHYAS</name>
<feature type="chain" id="PRO_1000144462" description="Large ribosomal subunit protein bL17">
    <location>
        <begin position="1"/>
        <end position="118"/>
    </location>
</feature>
<keyword id="KW-1185">Reference proteome</keyword>
<keyword id="KW-0687">Ribonucleoprotein</keyword>
<keyword id="KW-0689">Ribosomal protein</keyword>
<organism>
    <name type="scientific">Phytoplasma australiense</name>
    <dbReference type="NCBI Taxonomy" id="59748"/>
    <lineage>
        <taxon>Bacteria</taxon>
        <taxon>Bacillati</taxon>
        <taxon>Mycoplasmatota</taxon>
        <taxon>Mollicutes</taxon>
        <taxon>Acholeplasmatales</taxon>
        <taxon>Acholeplasmataceae</taxon>
        <taxon>Candidatus Phytoplasma</taxon>
        <taxon>16SrXII (Stolbur group)</taxon>
    </lineage>
</organism>
<gene>
    <name evidence="1" type="primary">rplQ</name>
    <name type="ordered locus">PA0559</name>
</gene>
<reference key="1">
    <citation type="journal article" date="2008" name="J. Bacteriol.">
        <title>Comparative genome analysis of 'Candidatus Phytoplasma australiense' (subgroup tuf-Australia I; rp-A) and 'Ca. Phytoplasma asteris' strains OY-M and AY-WB.</title>
        <authorList>
            <person name="Tran-Nguyen L.T."/>
            <person name="Kube M."/>
            <person name="Schneider B."/>
            <person name="Reinhardt R."/>
            <person name="Gibb K.S."/>
        </authorList>
    </citation>
    <scope>NUCLEOTIDE SEQUENCE [LARGE SCALE GENOMIC DNA]</scope>
</reference>
<accession>B1VAC0</accession>
<proteinExistence type="inferred from homology"/>
<evidence type="ECO:0000255" key="1">
    <source>
        <dbReference type="HAMAP-Rule" id="MF_01368"/>
    </source>
</evidence>
<evidence type="ECO:0000305" key="2"/>